<sequence>MNATIFALLLLLNLAMYNAAEQSSETDMDDTLLIPENYRKGCFKEGHSCPKTAPCCRPLVCKGPSPNTKKCTRP</sequence>
<proteinExistence type="evidence at protein level"/>
<reference key="1">
    <citation type="journal article" date="2008" name="Cell. Mol. Life Sci.">
        <title>Molecular diversity and evolution of cystine knot toxins of the tarantula Chilobrachys jingzhao.</title>
        <authorList>
            <person name="Chen J."/>
            <person name="Deng M."/>
            <person name="He Q."/>
            <person name="Meng E."/>
            <person name="Jiang L."/>
            <person name="Liao Z."/>
            <person name="Rong M."/>
            <person name="Liang S."/>
        </authorList>
    </citation>
    <scope>NUCLEOTIDE SEQUENCE [LARGE SCALE MRNA]</scope>
    <source>
        <tissue>Venom gland</tissue>
    </source>
</reference>
<reference key="2">
    <citation type="journal article" date="2007" name="Proteomics">
        <title>Proteomic and peptidomic analysis of the venom from Chinese tarantula Chilobrachys jingzhao.</title>
        <authorList>
            <person name="Liao Z."/>
            <person name="Cao J."/>
            <person name="Li S."/>
            <person name="Yan X."/>
            <person name="Hu W."/>
            <person name="He Q."/>
            <person name="Chen J."/>
            <person name="Tang J."/>
            <person name="Xie J."/>
            <person name="Liang S."/>
        </authorList>
    </citation>
    <scope>PROTEIN SEQUENCE OF 40-52</scope>
    <scope>MASS SPECTROMETRY</scope>
    <source>
        <tissue>Venom</tissue>
    </source>
</reference>
<evidence type="ECO:0000250" key="1"/>
<evidence type="ECO:0000255" key="2"/>
<evidence type="ECO:0000269" key="3">
    <source>
    </source>
</evidence>
<comment type="function">
    <text>Probable ion channel inhibitor.</text>
</comment>
<comment type="subcellular location">
    <subcellularLocation>
        <location>Secreted</location>
    </subcellularLocation>
</comment>
<comment type="tissue specificity">
    <text>Expressed by the venom gland.</text>
</comment>
<comment type="domain">
    <text evidence="1">The presence of a 'disulfide through disulfide knot' structurally defines this protein as a knottin.</text>
</comment>
<comment type="mass spectrometry">
    <text>Monoisotopic mass.</text>
</comment>
<comment type="similarity">
    <text>Belongs to the neurotoxin 36 family. 01 subfamily.</text>
</comment>
<feature type="signal peptide" evidence="2">
    <location>
        <begin position="1"/>
        <end position="19"/>
    </location>
</feature>
<feature type="propeptide" id="PRO_0000398518" evidence="3">
    <location>
        <begin position="20"/>
        <end position="39"/>
    </location>
</feature>
<feature type="peptide" id="PRO_0000398519" description="U5-theraphotoxin-Cg1a">
    <location>
        <begin position="40"/>
        <end position="74"/>
    </location>
</feature>
<feature type="disulfide bond" evidence="1">
    <location>
        <begin position="42"/>
        <end position="56"/>
    </location>
</feature>
<feature type="disulfide bond" evidence="1">
    <location>
        <begin position="49"/>
        <end position="61"/>
    </location>
</feature>
<feature type="disulfide bond" evidence="1">
    <location>
        <begin position="55"/>
        <end position="71"/>
    </location>
</feature>
<accession>B1P1B3</accession>
<name>JZT52_CHIGU</name>
<keyword id="KW-0903">Direct protein sequencing</keyword>
<keyword id="KW-1015">Disulfide bond</keyword>
<keyword id="KW-0872">Ion channel impairing toxin</keyword>
<keyword id="KW-0960">Knottin</keyword>
<keyword id="KW-0964">Secreted</keyword>
<keyword id="KW-0732">Signal</keyword>
<keyword id="KW-0800">Toxin</keyword>
<dbReference type="EMBL" id="EU233844">
    <property type="protein sequence ID" value="ABY71663.1"/>
    <property type="molecule type" value="mRNA"/>
</dbReference>
<dbReference type="SMR" id="B1P1B3"/>
<dbReference type="ArachnoServer" id="AS000793">
    <property type="toxin name" value="U5-theraphotoxin-Cg1a"/>
</dbReference>
<dbReference type="GO" id="GO:0005576">
    <property type="term" value="C:extracellular region"/>
    <property type="evidence" value="ECO:0007669"/>
    <property type="project" value="UniProtKB-SubCell"/>
</dbReference>
<dbReference type="GO" id="GO:0099106">
    <property type="term" value="F:ion channel regulator activity"/>
    <property type="evidence" value="ECO:0007669"/>
    <property type="project" value="UniProtKB-KW"/>
</dbReference>
<dbReference type="GO" id="GO:0090729">
    <property type="term" value="F:toxin activity"/>
    <property type="evidence" value="ECO:0007669"/>
    <property type="project" value="UniProtKB-KW"/>
</dbReference>
<organism>
    <name type="scientific">Chilobrachys guangxiensis</name>
    <name type="common">Chinese earth tiger tarantula</name>
    <name type="synonym">Chilobrachys jingzhao</name>
    <dbReference type="NCBI Taxonomy" id="278060"/>
    <lineage>
        <taxon>Eukaryota</taxon>
        <taxon>Metazoa</taxon>
        <taxon>Ecdysozoa</taxon>
        <taxon>Arthropoda</taxon>
        <taxon>Chelicerata</taxon>
        <taxon>Arachnida</taxon>
        <taxon>Araneae</taxon>
        <taxon>Mygalomorphae</taxon>
        <taxon>Theraphosidae</taxon>
        <taxon>Chilobrachys</taxon>
    </lineage>
</organism>
<protein>
    <recommendedName>
        <fullName>U5-theraphotoxin-Cg1a</fullName>
        <shortName>U5-TRTX-Cg1a</shortName>
    </recommendedName>
    <alternativeName>
        <fullName>Jingzhaotoxin-52</fullName>
        <shortName>JZTX-52</shortName>
    </alternativeName>
    <alternativeName>
        <fullName>Peptide F1-27.45</fullName>
    </alternativeName>
</protein>